<name>RR3_CYCTA</name>
<dbReference type="EMBL" id="AP009339">
    <property type="protein sequence ID" value="BAF64986.1"/>
    <property type="molecule type" value="Genomic_DNA"/>
</dbReference>
<dbReference type="RefSeq" id="YP_001312245.1">
    <property type="nucleotide sequence ID" value="NC_009618.1"/>
</dbReference>
<dbReference type="SMR" id="A6H5M0"/>
<dbReference type="GeneID" id="5309534"/>
<dbReference type="GO" id="GO:0009507">
    <property type="term" value="C:chloroplast"/>
    <property type="evidence" value="ECO:0007669"/>
    <property type="project" value="UniProtKB-SubCell"/>
</dbReference>
<dbReference type="GO" id="GO:0022627">
    <property type="term" value="C:cytosolic small ribosomal subunit"/>
    <property type="evidence" value="ECO:0007669"/>
    <property type="project" value="TreeGrafter"/>
</dbReference>
<dbReference type="GO" id="GO:0019843">
    <property type="term" value="F:rRNA binding"/>
    <property type="evidence" value="ECO:0007669"/>
    <property type="project" value="UniProtKB-UniRule"/>
</dbReference>
<dbReference type="GO" id="GO:0003735">
    <property type="term" value="F:structural constituent of ribosome"/>
    <property type="evidence" value="ECO:0007669"/>
    <property type="project" value="InterPro"/>
</dbReference>
<dbReference type="GO" id="GO:0006412">
    <property type="term" value="P:translation"/>
    <property type="evidence" value="ECO:0007669"/>
    <property type="project" value="UniProtKB-UniRule"/>
</dbReference>
<dbReference type="CDD" id="cd02412">
    <property type="entry name" value="KH-II_30S_S3"/>
    <property type="match status" value="1"/>
</dbReference>
<dbReference type="Gene3D" id="3.30.300.20">
    <property type="match status" value="1"/>
</dbReference>
<dbReference type="Gene3D" id="3.30.1140.32">
    <property type="entry name" value="Ribosomal protein S3, C-terminal domain"/>
    <property type="match status" value="1"/>
</dbReference>
<dbReference type="HAMAP" id="MF_01309_B">
    <property type="entry name" value="Ribosomal_uS3_B"/>
    <property type="match status" value="1"/>
</dbReference>
<dbReference type="InterPro" id="IPR015946">
    <property type="entry name" value="KH_dom-like_a/b"/>
</dbReference>
<dbReference type="InterPro" id="IPR004044">
    <property type="entry name" value="KH_dom_type_2"/>
</dbReference>
<dbReference type="InterPro" id="IPR009019">
    <property type="entry name" value="KH_sf_prok-type"/>
</dbReference>
<dbReference type="InterPro" id="IPR036419">
    <property type="entry name" value="Ribosomal_S3_C_sf"/>
</dbReference>
<dbReference type="InterPro" id="IPR005704">
    <property type="entry name" value="Ribosomal_uS3_bac-typ"/>
</dbReference>
<dbReference type="InterPro" id="IPR001351">
    <property type="entry name" value="Ribosomal_uS3_C"/>
</dbReference>
<dbReference type="InterPro" id="IPR018280">
    <property type="entry name" value="Ribosomal_uS3_CS"/>
</dbReference>
<dbReference type="NCBIfam" id="TIGR01009">
    <property type="entry name" value="rpsC_bact"/>
    <property type="match status" value="1"/>
</dbReference>
<dbReference type="PANTHER" id="PTHR11760">
    <property type="entry name" value="30S/40S RIBOSOMAL PROTEIN S3"/>
    <property type="match status" value="1"/>
</dbReference>
<dbReference type="PANTHER" id="PTHR11760:SF19">
    <property type="entry name" value="SMALL RIBOSOMAL SUBUNIT PROTEIN US3C"/>
    <property type="match status" value="1"/>
</dbReference>
<dbReference type="Pfam" id="PF00189">
    <property type="entry name" value="Ribosomal_S3_C"/>
    <property type="match status" value="1"/>
</dbReference>
<dbReference type="SUPFAM" id="SSF54814">
    <property type="entry name" value="Prokaryotic type KH domain (KH-domain type II)"/>
    <property type="match status" value="1"/>
</dbReference>
<dbReference type="SUPFAM" id="SSF54821">
    <property type="entry name" value="Ribosomal protein S3 C-terminal domain"/>
    <property type="match status" value="1"/>
</dbReference>
<dbReference type="PROSITE" id="PS50823">
    <property type="entry name" value="KH_TYPE_2"/>
    <property type="match status" value="1"/>
</dbReference>
<dbReference type="PROSITE" id="PS00548">
    <property type="entry name" value="RIBOSOMAL_S3"/>
    <property type="match status" value="1"/>
</dbReference>
<evidence type="ECO:0000250" key="1"/>
<evidence type="ECO:0000305" key="2"/>
<geneLocation type="chloroplast"/>
<keyword id="KW-0150">Chloroplast</keyword>
<keyword id="KW-0934">Plastid</keyword>
<keyword id="KW-0687">Ribonucleoprotein</keyword>
<keyword id="KW-0689">Ribosomal protein</keyword>
<keyword id="KW-0694">RNA-binding</keyword>
<keyword id="KW-0699">rRNA-binding</keyword>
<sequence>MGQKMNPLGFRLGITQNHRSHWFAQQKNYSEDLREDEKISNCIVNYIRRHMRSSSNHGGIARVEIRRKIDLIQVEIHIGFPNLLIENRGRGSEQLRTDVRNMLNPVDGKLNIAIVKVAKPYGEPNILAEFIALQLEDRVSLGRTVKRAIELAEQADIKGIQIQIAGRLDGNEIARVEWAREGRVPLQTIRAKIDHCYYPAQTIYGVLGIKIWIFGDEK</sequence>
<gene>
    <name type="primary">rps3</name>
</gene>
<proteinExistence type="inferred from homology"/>
<organism>
    <name type="scientific">Cycas taitungensis</name>
    <name type="common">Prince sago</name>
    <name type="synonym">Cycas taiwaniana</name>
    <dbReference type="NCBI Taxonomy" id="54799"/>
    <lineage>
        <taxon>Eukaryota</taxon>
        <taxon>Viridiplantae</taxon>
        <taxon>Streptophyta</taxon>
        <taxon>Embryophyta</taxon>
        <taxon>Tracheophyta</taxon>
        <taxon>Spermatophyta</taxon>
        <taxon>Cycadidae</taxon>
        <taxon>Cycadales</taxon>
        <taxon>Cycadaceae</taxon>
        <taxon>Cycas</taxon>
    </lineage>
</organism>
<reference key="1">
    <citation type="journal article" date="2007" name="Mol. Biol. Evol.">
        <title>Chloroplast genome (cpDNA) of Cycas taitungensis and 56 cp protein-coding genes of Gnetum parvifolium: insights into cpDNA evolution and phylogeny of extant seed plants.</title>
        <authorList>
            <person name="Wu C.-S."/>
            <person name="Wang Y.-N."/>
            <person name="Liu S.-M."/>
            <person name="Chaw S.-M."/>
        </authorList>
    </citation>
    <scope>NUCLEOTIDE SEQUENCE [LARGE SCALE GENOMIC DNA]</scope>
</reference>
<comment type="subunit">
    <text evidence="1">Part of the 30S ribosomal subunit.</text>
</comment>
<comment type="subcellular location">
    <subcellularLocation>
        <location>Plastid</location>
        <location>Chloroplast</location>
    </subcellularLocation>
</comment>
<comment type="similarity">
    <text evidence="2">Belongs to the universal ribosomal protein uS3 family.</text>
</comment>
<feature type="chain" id="PRO_0000323325" description="Small ribosomal subunit protein uS3c">
    <location>
        <begin position="1"/>
        <end position="218"/>
    </location>
</feature>
<feature type="domain" description="KH type-2">
    <location>
        <begin position="47"/>
        <end position="118"/>
    </location>
</feature>
<protein>
    <recommendedName>
        <fullName evidence="2">Small ribosomal subunit protein uS3c</fullName>
    </recommendedName>
    <alternativeName>
        <fullName>30S ribosomal protein S3, chloroplastic</fullName>
    </alternativeName>
</protein>
<accession>A6H5M0</accession>